<reference key="1">
    <citation type="journal article" date="2006" name="BMC Genomics">
        <title>Comparative genome analysis: selection pressure on the Borrelia vls cassettes is essential for infectivity.</title>
        <authorList>
            <person name="Gloeckner G."/>
            <person name="Schulte-Spechtel U."/>
            <person name="Schilhabel M."/>
            <person name="Felder M."/>
            <person name="Suehnel J."/>
            <person name="Wilske B."/>
            <person name="Platzer M."/>
        </authorList>
    </citation>
    <scope>NUCLEOTIDE SEQUENCE [LARGE SCALE GENOMIC DNA]</scope>
    <source>
        <strain>PKo</strain>
    </source>
</reference>
<reference key="2">
    <citation type="journal article" date="2011" name="J. Bacteriol.">
        <title>Whole-genome sequences of two Borrelia afzelii and two Borrelia garinii Lyme disease agent isolates.</title>
        <authorList>
            <person name="Casjens S.R."/>
            <person name="Mongodin E.F."/>
            <person name="Qiu W.G."/>
            <person name="Dunn J.J."/>
            <person name="Luft B.J."/>
            <person name="Fraser-Liggett C.M."/>
            <person name="Schutzer S.E."/>
        </authorList>
    </citation>
    <scope>NUCLEOTIDE SEQUENCE [LARGE SCALE GENOMIC DNA]</scope>
    <source>
        <strain>PKo</strain>
    </source>
</reference>
<evidence type="ECO:0000255" key="1">
    <source>
        <dbReference type="HAMAP-Rule" id="MF_00500"/>
    </source>
</evidence>
<evidence type="ECO:0000305" key="2"/>
<comment type="function">
    <text evidence="1">Binds directly to 16S ribosomal RNA.</text>
</comment>
<comment type="similarity">
    <text evidence="1">Belongs to the bacterial ribosomal protein bS20 family.</text>
</comment>
<feature type="chain" id="PRO_1000014552" description="Small ribosomal subunit protein bS20">
    <location>
        <begin position="1"/>
        <end position="85"/>
    </location>
</feature>
<accession>Q0SNS8</accession>
<accession>G0IR76</accession>
<gene>
    <name evidence="1" type="primary">rpsT</name>
    <name type="ordered locus">BAPKO_0242</name>
    <name type="ordered locus">BafPKo_0235</name>
</gene>
<proteinExistence type="inferred from homology"/>
<name>RS20_BORAP</name>
<organism>
    <name type="scientific">Borreliella afzelii (strain PKo)</name>
    <name type="common">Borrelia afzelii</name>
    <dbReference type="NCBI Taxonomy" id="390236"/>
    <lineage>
        <taxon>Bacteria</taxon>
        <taxon>Pseudomonadati</taxon>
        <taxon>Spirochaetota</taxon>
        <taxon>Spirochaetia</taxon>
        <taxon>Spirochaetales</taxon>
        <taxon>Borreliaceae</taxon>
        <taxon>Borreliella</taxon>
    </lineage>
</organism>
<protein>
    <recommendedName>
        <fullName evidence="1">Small ribosomal subunit protein bS20</fullName>
    </recommendedName>
    <alternativeName>
        <fullName evidence="2">30S ribosomal protein S20</fullName>
    </alternativeName>
</protein>
<sequence>MRKNASALKRSRQNLKRKIRNVSVKSELKTIEKRCINMIKAGKKDEAIEFFKFVAKKLDTAARKRIIHKNKAARKKSRLNVLLLK</sequence>
<dbReference type="EMBL" id="CP000395">
    <property type="protein sequence ID" value="ABH01500.1"/>
    <property type="molecule type" value="Genomic_DNA"/>
</dbReference>
<dbReference type="EMBL" id="CP002933">
    <property type="protein sequence ID" value="AEL69462.1"/>
    <property type="molecule type" value="Genomic_DNA"/>
</dbReference>
<dbReference type="RefSeq" id="WP_002556832.1">
    <property type="nucleotide sequence ID" value="NZ_CP160066.1"/>
</dbReference>
<dbReference type="SMR" id="Q0SNS8"/>
<dbReference type="STRING" id="29518.BLA32_03140"/>
<dbReference type="GeneID" id="77265074"/>
<dbReference type="KEGG" id="baf:BAPKO_0242"/>
<dbReference type="KEGG" id="bafz:BafPKo_0235"/>
<dbReference type="PATRIC" id="fig|390236.22.peg.229"/>
<dbReference type="eggNOG" id="COG0268">
    <property type="taxonomic scope" value="Bacteria"/>
</dbReference>
<dbReference type="HOGENOM" id="CLU_160655_4_0_12"/>
<dbReference type="OrthoDB" id="9808392at2"/>
<dbReference type="Proteomes" id="UP000005216">
    <property type="component" value="Chromosome"/>
</dbReference>
<dbReference type="GO" id="GO:0005829">
    <property type="term" value="C:cytosol"/>
    <property type="evidence" value="ECO:0007669"/>
    <property type="project" value="TreeGrafter"/>
</dbReference>
<dbReference type="GO" id="GO:0015935">
    <property type="term" value="C:small ribosomal subunit"/>
    <property type="evidence" value="ECO:0007669"/>
    <property type="project" value="TreeGrafter"/>
</dbReference>
<dbReference type="GO" id="GO:0070181">
    <property type="term" value="F:small ribosomal subunit rRNA binding"/>
    <property type="evidence" value="ECO:0007669"/>
    <property type="project" value="TreeGrafter"/>
</dbReference>
<dbReference type="GO" id="GO:0003735">
    <property type="term" value="F:structural constituent of ribosome"/>
    <property type="evidence" value="ECO:0007669"/>
    <property type="project" value="InterPro"/>
</dbReference>
<dbReference type="GO" id="GO:0006412">
    <property type="term" value="P:translation"/>
    <property type="evidence" value="ECO:0007669"/>
    <property type="project" value="UniProtKB-UniRule"/>
</dbReference>
<dbReference type="Gene3D" id="1.20.58.110">
    <property type="entry name" value="Ribosomal protein S20"/>
    <property type="match status" value="1"/>
</dbReference>
<dbReference type="HAMAP" id="MF_00500">
    <property type="entry name" value="Ribosomal_bS20"/>
    <property type="match status" value="1"/>
</dbReference>
<dbReference type="InterPro" id="IPR002583">
    <property type="entry name" value="Ribosomal_bS20"/>
</dbReference>
<dbReference type="InterPro" id="IPR036510">
    <property type="entry name" value="Ribosomal_bS20_sf"/>
</dbReference>
<dbReference type="NCBIfam" id="TIGR00029">
    <property type="entry name" value="S20"/>
    <property type="match status" value="1"/>
</dbReference>
<dbReference type="PANTHER" id="PTHR33398">
    <property type="entry name" value="30S RIBOSOMAL PROTEIN S20"/>
    <property type="match status" value="1"/>
</dbReference>
<dbReference type="PANTHER" id="PTHR33398:SF1">
    <property type="entry name" value="SMALL RIBOSOMAL SUBUNIT PROTEIN BS20C"/>
    <property type="match status" value="1"/>
</dbReference>
<dbReference type="Pfam" id="PF01649">
    <property type="entry name" value="Ribosomal_S20p"/>
    <property type="match status" value="1"/>
</dbReference>
<dbReference type="SUPFAM" id="SSF46992">
    <property type="entry name" value="Ribosomal protein S20"/>
    <property type="match status" value="1"/>
</dbReference>
<keyword id="KW-0687">Ribonucleoprotein</keyword>
<keyword id="KW-0689">Ribosomal protein</keyword>
<keyword id="KW-0694">RNA-binding</keyword>
<keyword id="KW-0699">rRNA-binding</keyword>